<comment type="function">
    <text evidence="1">Catalyzes the reversible isomerization of glucose-6-phosphate to fructose-6-phosphate.</text>
</comment>
<comment type="catalytic activity">
    <reaction evidence="1">
        <text>alpha-D-glucose 6-phosphate = beta-D-fructose 6-phosphate</text>
        <dbReference type="Rhea" id="RHEA:11816"/>
        <dbReference type="ChEBI" id="CHEBI:57634"/>
        <dbReference type="ChEBI" id="CHEBI:58225"/>
        <dbReference type="EC" id="5.3.1.9"/>
    </reaction>
</comment>
<comment type="pathway">
    <text evidence="1">Carbohydrate biosynthesis; gluconeogenesis.</text>
</comment>
<comment type="pathway">
    <text evidence="1">Carbohydrate degradation; glycolysis; D-glyceraldehyde 3-phosphate and glycerone phosphate from D-glucose: step 2/4.</text>
</comment>
<comment type="subcellular location">
    <subcellularLocation>
        <location evidence="1">Cytoplasm</location>
    </subcellularLocation>
</comment>
<comment type="similarity">
    <text evidence="1">Belongs to the GPI family.</text>
</comment>
<dbReference type="EC" id="5.3.1.9" evidence="1"/>
<dbReference type="EMBL" id="CP000725">
    <property type="protein sequence ID" value="ABV09302.1"/>
    <property type="molecule type" value="Genomic_DNA"/>
</dbReference>
<dbReference type="RefSeq" id="WP_011999696.1">
    <property type="nucleotide sequence ID" value="NC_009785.1"/>
</dbReference>
<dbReference type="SMR" id="A8AUL5"/>
<dbReference type="STRING" id="467705.SGO_0154"/>
<dbReference type="KEGG" id="sgo:SGO_0154"/>
<dbReference type="eggNOG" id="COG0166">
    <property type="taxonomic scope" value="Bacteria"/>
</dbReference>
<dbReference type="HOGENOM" id="CLU_037303_0_1_9"/>
<dbReference type="UniPathway" id="UPA00109">
    <property type="reaction ID" value="UER00181"/>
</dbReference>
<dbReference type="UniPathway" id="UPA00138"/>
<dbReference type="Proteomes" id="UP000001131">
    <property type="component" value="Chromosome"/>
</dbReference>
<dbReference type="GO" id="GO:0005829">
    <property type="term" value="C:cytosol"/>
    <property type="evidence" value="ECO:0007669"/>
    <property type="project" value="TreeGrafter"/>
</dbReference>
<dbReference type="GO" id="GO:0097367">
    <property type="term" value="F:carbohydrate derivative binding"/>
    <property type="evidence" value="ECO:0007669"/>
    <property type="project" value="InterPro"/>
</dbReference>
<dbReference type="GO" id="GO:0004347">
    <property type="term" value="F:glucose-6-phosphate isomerase activity"/>
    <property type="evidence" value="ECO:0007669"/>
    <property type="project" value="UniProtKB-UniRule"/>
</dbReference>
<dbReference type="GO" id="GO:0048029">
    <property type="term" value="F:monosaccharide binding"/>
    <property type="evidence" value="ECO:0007669"/>
    <property type="project" value="TreeGrafter"/>
</dbReference>
<dbReference type="GO" id="GO:0006094">
    <property type="term" value="P:gluconeogenesis"/>
    <property type="evidence" value="ECO:0007669"/>
    <property type="project" value="UniProtKB-UniRule"/>
</dbReference>
<dbReference type="GO" id="GO:0051156">
    <property type="term" value="P:glucose 6-phosphate metabolic process"/>
    <property type="evidence" value="ECO:0007669"/>
    <property type="project" value="TreeGrafter"/>
</dbReference>
<dbReference type="GO" id="GO:0006096">
    <property type="term" value="P:glycolytic process"/>
    <property type="evidence" value="ECO:0007669"/>
    <property type="project" value="UniProtKB-UniRule"/>
</dbReference>
<dbReference type="CDD" id="cd05015">
    <property type="entry name" value="SIS_PGI_1"/>
    <property type="match status" value="1"/>
</dbReference>
<dbReference type="CDD" id="cd05016">
    <property type="entry name" value="SIS_PGI_2"/>
    <property type="match status" value="1"/>
</dbReference>
<dbReference type="FunFam" id="3.40.50.10490:FF:000015">
    <property type="entry name" value="Glucose-6-phosphate isomerase"/>
    <property type="match status" value="1"/>
</dbReference>
<dbReference type="FunFam" id="3.40.50.10490:FF:000016">
    <property type="entry name" value="Glucose-6-phosphate isomerase"/>
    <property type="match status" value="1"/>
</dbReference>
<dbReference type="Gene3D" id="3.40.50.10490">
    <property type="entry name" value="Glucose-6-phosphate isomerase like protein, domain 1"/>
    <property type="match status" value="3"/>
</dbReference>
<dbReference type="HAMAP" id="MF_00473">
    <property type="entry name" value="G6P_isomerase"/>
    <property type="match status" value="1"/>
</dbReference>
<dbReference type="InterPro" id="IPR001672">
    <property type="entry name" value="G6P_Isomerase"/>
</dbReference>
<dbReference type="InterPro" id="IPR018189">
    <property type="entry name" value="Phosphoglucose_isomerase_CS"/>
</dbReference>
<dbReference type="InterPro" id="IPR046348">
    <property type="entry name" value="SIS_dom_sf"/>
</dbReference>
<dbReference type="InterPro" id="IPR035476">
    <property type="entry name" value="SIS_PGI_1"/>
</dbReference>
<dbReference type="InterPro" id="IPR035482">
    <property type="entry name" value="SIS_PGI_2"/>
</dbReference>
<dbReference type="NCBIfam" id="NF010697">
    <property type="entry name" value="PRK14097.1"/>
    <property type="match status" value="1"/>
</dbReference>
<dbReference type="PANTHER" id="PTHR11469">
    <property type="entry name" value="GLUCOSE-6-PHOSPHATE ISOMERASE"/>
    <property type="match status" value="1"/>
</dbReference>
<dbReference type="PANTHER" id="PTHR11469:SF1">
    <property type="entry name" value="GLUCOSE-6-PHOSPHATE ISOMERASE"/>
    <property type="match status" value="1"/>
</dbReference>
<dbReference type="Pfam" id="PF00342">
    <property type="entry name" value="PGI"/>
    <property type="match status" value="1"/>
</dbReference>
<dbReference type="PRINTS" id="PR00662">
    <property type="entry name" value="G6PISOMERASE"/>
</dbReference>
<dbReference type="SUPFAM" id="SSF53697">
    <property type="entry name" value="SIS domain"/>
    <property type="match status" value="1"/>
</dbReference>
<dbReference type="PROSITE" id="PS00765">
    <property type="entry name" value="P_GLUCOSE_ISOMERASE_1"/>
    <property type="match status" value="1"/>
</dbReference>
<dbReference type="PROSITE" id="PS00174">
    <property type="entry name" value="P_GLUCOSE_ISOMERASE_2"/>
    <property type="match status" value="1"/>
</dbReference>
<dbReference type="PROSITE" id="PS51463">
    <property type="entry name" value="P_GLUCOSE_ISOMERASE_3"/>
    <property type="match status" value="1"/>
</dbReference>
<accession>A8AUL5</accession>
<evidence type="ECO:0000255" key="1">
    <source>
        <dbReference type="HAMAP-Rule" id="MF_00473"/>
    </source>
</evidence>
<protein>
    <recommendedName>
        <fullName evidence="1">Glucose-6-phosphate isomerase</fullName>
        <shortName evidence="1">GPI</shortName>
        <ecNumber evidence="1">5.3.1.9</ecNumber>
    </recommendedName>
    <alternativeName>
        <fullName evidence="1">Phosphoglucose isomerase</fullName>
        <shortName evidence="1">PGI</shortName>
    </alternativeName>
    <alternativeName>
        <fullName evidence="1">Phosphohexose isomerase</fullName>
        <shortName evidence="1">PHI</shortName>
    </alternativeName>
</protein>
<gene>
    <name evidence="1" type="primary">pgi</name>
    <name type="ordered locus">SGO_0154</name>
</gene>
<proteinExistence type="inferred from homology"/>
<sequence length="449" mass="49946">MPHIKFDYSKVLDKFVAPHEVEYMQSQVTAADELIRKGTGAGSDFLGWLDLPENYDREEFDRILKAAEQIKSDSDVLVVIGIGGSYLGAKAAIDFLNHHFANLQTKEERKAPQILYAGNSISSTYLADLVEYVADKDFSVNVISKSGTTTEPAIAFRVFKELLVKKYGQEEANKRIYATTDRQKGAVKVEADANGWETFVVPDDIGGRFSVLTAVGLLPIAASGADIKALMEGANAARKDYTSDKLSENEAYQYAAVRNILYRKGYATEILVNYEPSLQYFSEWWKQLAGESEGKDQKGIYPTSANFSTDLHSLGQFIQEGTRIMFETVVRVDKPRKNVIIPTLEEDLDGLGYLQGKDVDFVNKKATDGVLLAHTDGDVPNMYVTLPEQDAFTLGYTIYFFELAIALSGYLNAINPFDQPGVEAYKRNMFALLGKPGFEELSKELNARL</sequence>
<feature type="chain" id="PRO_1000081252" description="Glucose-6-phosphate isomerase">
    <location>
        <begin position="1"/>
        <end position="449"/>
    </location>
</feature>
<feature type="active site" description="Proton donor" evidence="1">
    <location>
        <position position="291"/>
    </location>
</feature>
<feature type="active site" evidence="1">
    <location>
        <position position="312"/>
    </location>
</feature>
<feature type="active site" evidence="1">
    <location>
        <position position="426"/>
    </location>
</feature>
<reference key="1">
    <citation type="journal article" date="2007" name="J. Bacteriol.">
        <title>Genome-wide transcriptional changes in Streptococcus gordonii in response to competence signaling peptide.</title>
        <authorList>
            <person name="Vickerman M.M."/>
            <person name="Iobst S."/>
            <person name="Jesionowski A.M."/>
            <person name="Gill S.R."/>
        </authorList>
    </citation>
    <scope>NUCLEOTIDE SEQUENCE [LARGE SCALE GENOMIC DNA]</scope>
    <source>
        <strain>Challis / ATCC 35105 / BCRC 15272 / CH1 / DL1 / V288</strain>
    </source>
</reference>
<keyword id="KW-0963">Cytoplasm</keyword>
<keyword id="KW-0312">Gluconeogenesis</keyword>
<keyword id="KW-0324">Glycolysis</keyword>
<keyword id="KW-0413">Isomerase</keyword>
<keyword id="KW-1185">Reference proteome</keyword>
<name>G6PI_STRGC</name>
<organism>
    <name type="scientific">Streptococcus gordonii (strain Challis / ATCC 35105 / BCRC 15272 / CH1 / DL1 / V288)</name>
    <dbReference type="NCBI Taxonomy" id="467705"/>
    <lineage>
        <taxon>Bacteria</taxon>
        <taxon>Bacillati</taxon>
        <taxon>Bacillota</taxon>
        <taxon>Bacilli</taxon>
        <taxon>Lactobacillales</taxon>
        <taxon>Streptococcaceae</taxon>
        <taxon>Streptococcus</taxon>
    </lineage>
</organism>